<feature type="chain" id="PRO_0000204669" description="Probable sucrose-phosphate synthase 1">
    <location>
        <begin position="1"/>
        <end position="1054"/>
    </location>
</feature>
<feature type="region of interest" description="Disordered" evidence="2">
    <location>
        <begin position="104"/>
        <end position="125"/>
    </location>
</feature>
<feature type="region of interest" description="Disordered" evidence="2">
    <location>
        <begin position="674"/>
        <end position="693"/>
    </location>
</feature>
<feature type="region of interest" description="Disordered" evidence="2">
    <location>
        <begin position="708"/>
        <end position="727"/>
    </location>
</feature>
<feature type="compositionally biased region" description="Basic and acidic residues" evidence="2">
    <location>
        <begin position="104"/>
        <end position="115"/>
    </location>
</feature>
<gene>
    <name type="primary">SPS1</name>
</gene>
<protein>
    <recommendedName>
        <fullName>Probable sucrose-phosphate synthase 1</fullName>
        <ecNumber>2.4.1.14</ecNumber>
    </recommendedName>
    <alternativeName>
        <fullName>UDP-glucose-fructose-phosphate glucosyltransferase 1</fullName>
    </alternativeName>
</protein>
<name>SPSA1_CRAPL</name>
<accession>O04932</accession>
<sequence length="1054" mass="119020">MAGNDWINSYLEAILDVGPGIDEAKGSLLLRERGRFSPTRYFVEEVVSGFDETDLHRSWIRAQATRSPQERNTRLENMCWRIWNLARQKKQLENEEAQRMAKRRLERERGRREAVADMSEDLSEGEKGDIVVDHSHHGESNRGRLPRINSVDTMEAWMNQQKGKKLYIVLISLHGLIRGENMELGRDSDTGGQVKYVVELARALGSMPGVYRVDLLTRQVSSPEVDWSYGEPTEMLPPRNSENMMDEMGESSGSYIVRIPFGPKDKYVAKELLWPHIPEFVDGALGHIIQMSKVLGEQIGNGHPIWPAAIHGHYADAGDSAALLSGALNVPMLFTGHSLGRDKLEQLLRQGRLSRDEINSTYKIMRRIEAEELSLDASEMVITSTRQEIEEQWRLYDGFDPILERKLRARIKRNVSCYGRFMPRMMVIPPGMEFHHIVPHDGDLDAEPEFNEDSKSPDPHIWTEIMRFFSNPRKPMILALARPDPKKNLTTLVKAFGECKPLRELANLTLIMGNRDNIDEMSGTNASVLLSILKMIDKYDLYGLVAYPKHHKQSDVPDIYRLAAKTKGVFINPAFIEPFGLTLIEAAAHGLPIVATKNGGPVDIHRVLDNGILVDPHNQESIADALLKLVAEKHLWAKCRANGLKNIHLFSWPEHCKSYLSKLASCKPRQPRWLRNEEDDDENSESDSPSDSLRDIQDISLNLKFSFDGDKNESREKGGGSHPDDRASKIENAVLEWSKGVAKGPQRSMSIEKGEHNSNAGKFPALRRRKIMFVIAVDCKPSAGLSESVRKVFAAVENERAEGSVGFILATSFNISEIRHFLVSEKLNPTDFDAFICNSGGDLYYSSHHSEDNPFVVDLYYHSQIEYRWGGEGLRKTLVRWAASITDKKGEKEEHVIIEDEETSADYCYSFKVQKPNVVPPVKEARKVMRIQALRCHVVYCQNGNKINVIPVLASRAQALRYLYLRWGMELSKTVVVVGESGDTDYEEMLGGVHKTVVLSGVCTTATNLLHANRSYPLADVVCFDDLNIFKTHNEECSSTDLRALLEEHGAFKA</sequence>
<dbReference type="EC" id="2.4.1.14"/>
<dbReference type="EMBL" id="Y11821">
    <property type="protein sequence ID" value="CAA72506.1"/>
    <property type="molecule type" value="mRNA"/>
</dbReference>
<dbReference type="PIR" id="T09833">
    <property type="entry name" value="T09833"/>
</dbReference>
<dbReference type="SMR" id="O04932"/>
<dbReference type="CAZy" id="GT4">
    <property type="family name" value="Glycosyltransferase Family 4"/>
</dbReference>
<dbReference type="UniPathway" id="UPA00371">
    <property type="reaction ID" value="UER00545"/>
</dbReference>
<dbReference type="GO" id="GO:0046524">
    <property type="term" value="F:sucrose-phosphate synthase activity"/>
    <property type="evidence" value="ECO:0007669"/>
    <property type="project" value="UniProtKB-EC"/>
</dbReference>
<dbReference type="GO" id="GO:0005986">
    <property type="term" value="P:sucrose biosynthetic process"/>
    <property type="evidence" value="ECO:0007669"/>
    <property type="project" value="UniProtKB-UniPathway"/>
</dbReference>
<dbReference type="CDD" id="cd03800">
    <property type="entry name" value="GT4_sucrose_synthase"/>
    <property type="match status" value="1"/>
</dbReference>
<dbReference type="CDD" id="cd16419">
    <property type="entry name" value="HAD_SPS"/>
    <property type="match status" value="1"/>
</dbReference>
<dbReference type="FunFam" id="3.40.50.2000:FF:000077">
    <property type="entry name" value="Sucrose-phosphate synthase 2"/>
    <property type="match status" value="1"/>
</dbReference>
<dbReference type="Gene3D" id="3.40.50.2000">
    <property type="entry name" value="Glycogen Phosphorylase B"/>
    <property type="match status" value="2"/>
</dbReference>
<dbReference type="InterPro" id="IPR001296">
    <property type="entry name" value="Glyco_trans_1"/>
</dbReference>
<dbReference type="InterPro" id="IPR006380">
    <property type="entry name" value="SPP-like_dom"/>
</dbReference>
<dbReference type="InterPro" id="IPR044161">
    <property type="entry name" value="SPS"/>
</dbReference>
<dbReference type="InterPro" id="IPR035659">
    <property type="entry name" value="SPS_C"/>
</dbReference>
<dbReference type="InterPro" id="IPR012819">
    <property type="entry name" value="SPS_pln"/>
</dbReference>
<dbReference type="InterPro" id="IPR000368">
    <property type="entry name" value="Sucrose_synth_GT-B1"/>
</dbReference>
<dbReference type="NCBIfam" id="TIGR02468">
    <property type="entry name" value="sucrsPsyn_pln"/>
    <property type="match status" value="1"/>
</dbReference>
<dbReference type="PANTHER" id="PTHR46039:SF2">
    <property type="entry name" value="SUCROSE-PHOSPHATE SYNTHASE 1"/>
    <property type="match status" value="1"/>
</dbReference>
<dbReference type="PANTHER" id="PTHR46039">
    <property type="entry name" value="SUCROSE-PHOSPHATE SYNTHASE 3-RELATED"/>
    <property type="match status" value="1"/>
</dbReference>
<dbReference type="Pfam" id="PF00534">
    <property type="entry name" value="Glycos_transf_1"/>
    <property type="match status" value="1"/>
</dbReference>
<dbReference type="Pfam" id="PF00862">
    <property type="entry name" value="GT-B_Sucrose_synth"/>
    <property type="match status" value="1"/>
</dbReference>
<dbReference type="Pfam" id="PF05116">
    <property type="entry name" value="S6PP"/>
    <property type="match status" value="1"/>
</dbReference>
<dbReference type="SUPFAM" id="SSF53756">
    <property type="entry name" value="UDP-Glycosyltransferase/glycogen phosphorylase"/>
    <property type="match status" value="1"/>
</dbReference>
<comment type="function">
    <text evidence="1">Plays a role in photosynthetic sucrose synthesis by catalyzing the rate-limiting step of sucrose biosynthesis from UDP-glucose and fructose- 6-phosphate. Involved in the regulation of carbon partitioning in the leaves of plants. May regulate the synthesis of sucrose and therefore play a major role as a limiting factor in the export of photoassimilates out of the leaf. Plays a role for sucrose availability that is essential for plant growth and fiber elongation (By similarity).</text>
</comment>
<comment type="catalytic activity">
    <reaction>
        <text>beta-D-fructose 6-phosphate + UDP-alpha-D-glucose = sucrose 6(F)-phosphate + UDP + H(+)</text>
        <dbReference type="Rhea" id="RHEA:22172"/>
        <dbReference type="ChEBI" id="CHEBI:15378"/>
        <dbReference type="ChEBI" id="CHEBI:57634"/>
        <dbReference type="ChEBI" id="CHEBI:57723"/>
        <dbReference type="ChEBI" id="CHEBI:58223"/>
        <dbReference type="ChEBI" id="CHEBI:58885"/>
        <dbReference type="EC" id="2.4.1.14"/>
    </reaction>
</comment>
<comment type="activity regulation">
    <text evidence="1">Activity is regulated by phosphorylation and moderated by concentration of metabolites and light.</text>
</comment>
<comment type="pathway">
    <text>Glycan biosynthesis; sucrose biosynthesis; sucrose from D-fructose 6-phosphate and UDP-alpha-D-glucose: step 1/2.</text>
</comment>
<comment type="subunit">
    <text evidence="1">Homodimer or homotetramer.</text>
</comment>
<comment type="similarity">
    <text evidence="3">Belongs to the glycosyltransferase 1 family.</text>
</comment>
<keyword id="KW-0328">Glycosyltransferase</keyword>
<keyword id="KW-0808">Transferase</keyword>
<reference key="1">
    <citation type="journal article" date="1997" name="Plant Physiol.">
        <title>Analysis of cDNA clones encoding sucrose-phosphate synthase in relation to sugar interconversions associated with dehydration in the resurrection plant Craterostigma plantagineum Hochst.</title>
        <authorList>
            <person name="Ingram J."/>
            <person name="Chandler J.W."/>
            <person name="Gallagher L."/>
            <person name="Salamini F."/>
            <person name="Bartels D."/>
        </authorList>
    </citation>
    <scope>NUCLEOTIDE SEQUENCE [MRNA]</scope>
</reference>
<organism>
    <name type="scientific">Craterostigma plantagineum</name>
    <name type="common">Blue gem</name>
    <name type="synonym">Torenia plantagineum</name>
    <dbReference type="NCBI Taxonomy" id="4153"/>
    <lineage>
        <taxon>Eukaryota</taxon>
        <taxon>Viridiplantae</taxon>
        <taxon>Streptophyta</taxon>
        <taxon>Embryophyta</taxon>
        <taxon>Tracheophyta</taxon>
        <taxon>Spermatophyta</taxon>
        <taxon>Magnoliopsida</taxon>
        <taxon>eudicotyledons</taxon>
        <taxon>Gunneridae</taxon>
        <taxon>Pentapetalae</taxon>
        <taxon>asterids</taxon>
        <taxon>lamiids</taxon>
        <taxon>Lamiales</taxon>
        <taxon>Linderniaceae</taxon>
        <taxon>Craterostigma</taxon>
    </lineage>
</organism>
<proteinExistence type="evidence at transcript level"/>
<evidence type="ECO:0000250" key="1"/>
<evidence type="ECO:0000256" key="2">
    <source>
        <dbReference type="SAM" id="MobiDB-lite"/>
    </source>
</evidence>
<evidence type="ECO:0000305" key="3"/>